<proteinExistence type="inferred from homology"/>
<evidence type="ECO:0000250" key="1">
    <source>
        <dbReference type="UniProtKB" id="P04798"/>
    </source>
</evidence>
<evidence type="ECO:0000250" key="2">
    <source>
        <dbReference type="UniProtKB" id="P54781"/>
    </source>
</evidence>
<evidence type="ECO:0000255" key="3"/>
<evidence type="ECO:0000303" key="4">
    <source>
    </source>
</evidence>
<evidence type="ECO:0000305" key="5"/>
<evidence type="ECO:0000305" key="6">
    <source>
    </source>
</evidence>
<evidence type="ECO:0000305" key="7">
    <source>
    </source>
</evidence>
<organism>
    <name type="scientific">Aspergillus fumigatus (strain ATCC MYA-4609 / CBS 101355 / FGSC A1100 / Af293)</name>
    <name type="common">Neosartorya fumigata</name>
    <dbReference type="NCBI Taxonomy" id="330879"/>
    <lineage>
        <taxon>Eukaryota</taxon>
        <taxon>Fungi</taxon>
        <taxon>Dikarya</taxon>
        <taxon>Ascomycota</taxon>
        <taxon>Pezizomycotina</taxon>
        <taxon>Eurotiomycetes</taxon>
        <taxon>Eurotiomycetidae</taxon>
        <taxon>Eurotiales</taxon>
        <taxon>Aspergillaceae</taxon>
        <taxon>Aspergillus</taxon>
        <taxon>Aspergillus subgen. Fumigati</taxon>
    </lineage>
</organism>
<keyword id="KW-0256">Endoplasmic reticulum</keyword>
<keyword id="KW-0349">Heme</keyword>
<keyword id="KW-0408">Iron</keyword>
<keyword id="KW-0444">Lipid biosynthesis</keyword>
<keyword id="KW-0443">Lipid metabolism</keyword>
<keyword id="KW-0472">Membrane</keyword>
<keyword id="KW-0479">Metal-binding</keyword>
<keyword id="KW-0503">Monooxygenase</keyword>
<keyword id="KW-0560">Oxidoreductase</keyword>
<keyword id="KW-1185">Reference proteome</keyword>
<keyword id="KW-0752">Steroid biosynthesis</keyword>
<keyword id="KW-0753">Steroid metabolism</keyword>
<keyword id="KW-0756">Sterol biosynthesis</keyword>
<keyword id="KW-1207">Sterol metabolism</keyword>
<keyword id="KW-0812">Transmembrane</keyword>
<keyword id="KW-1133">Transmembrane helix</keyword>
<comment type="function">
    <text evidence="2 6 7">C-22 sterol desaturase; part of the third module of ergosterol biosynthesis pathway that includes the late steps of the pathway (Probable) (PubMed:16110826). Erg5 converts 5-dehydroepisterol into ergosta-5,7,22,24(28)-tetraen-3beta-ol by forming the C-22(23) double bond in the sterol side chain (By similarity). The third module or late pathway involves the ergosterol synthesis itself through consecutive reactions that mainly occur in the endoplasmic reticulum (ER) membrane. Firstly, the squalene synthase erg9 catalyzes the condensation of 2 farnesyl pyrophosphate moieties to form squalene, which is the precursor of all steroids. Squalene synthase is crucial for balancing the incorporation of farnesyl diphosphate (FPP) into sterol and nonsterol isoprene synthesis. Secondly, squalene is converted into lanosterol by the consecutive action of the squalene epoxidase erg1 and the lanosterol synthase erg7. Then, the delta(24)-sterol C-methyltransferase erg6 methylates lanosterol at C-24 to produce eburicol. Eburicol is the substrate of the sterol 14-alpha demethylase encoded by cyp51A and cyp51B, to yield 4,4,24-trimethyl ergosta-8,14,24(28)-trienol. The C-14 reductase erg24 then reduces the C14=C15 double bond which leads to 4,4-dimethylfecosterol. A sequence of further demethylations at C-4, involving the C-4 demethylation complex containing the C-4 methylsterol oxidases erg25A or erg25B, the sterol-4-alpha-carboxylate 3-dehydrogenase erg26 and the 3-keto-steroid reductase erg27, leads to the production of fecosterol via 4-methylfecosterol. The C-8 sterol isomerase erg2 then catalyzes the reaction which results in unsaturation at C-7 in the B ring of sterols and thus converts fecosterol to episterol. The sterol-C5-desaturase erg3B then catalyzes the introduction of a C-5 double bond in the B ring to produce 5-dehydroepisterol. The 2 other sterol-C5-desaturases, erg3A and erg3C, seem to be less important in ergosterol biosynthesis. The C-22 sterol desaturase erg5 further converts 5-dehydroepisterol into ergosta-5,7,22,24(28)-tetraen-3beta-ol by forming the C-22(23) double bond in the sterol side chain. Finally, ergosta-5,7,22,24(28)-tetraen-3beta-ol is substrate of the C-24(28) sterol reductases erg4A and erg4B to produce ergosterol. Possible alternative sterol biosynthetic pathways might exist from fecosterol to ergosterol, depending on the activities of the erg3 isoforms (Probable) (PubMed:16110826, PubMed:18191972).</text>
</comment>
<comment type="catalytic activity">
    <reaction evidence="2">
        <text>5-dehydroepisterol + NADPH + O2 + H(+) = ergosta-5,7,22,24(28)-tetraen-3beta-ol + NADP(+) + 2 H2O</text>
        <dbReference type="Rhea" id="RHEA:33467"/>
        <dbReference type="ChEBI" id="CHEBI:15377"/>
        <dbReference type="ChEBI" id="CHEBI:15378"/>
        <dbReference type="ChEBI" id="CHEBI:15379"/>
        <dbReference type="ChEBI" id="CHEBI:18249"/>
        <dbReference type="ChEBI" id="CHEBI:52972"/>
        <dbReference type="ChEBI" id="CHEBI:57783"/>
        <dbReference type="ChEBI" id="CHEBI:58349"/>
        <dbReference type="EC" id="1.14.19.41"/>
    </reaction>
    <physiologicalReaction direction="left-to-right" evidence="2">
        <dbReference type="Rhea" id="RHEA:33468"/>
    </physiologicalReaction>
</comment>
<comment type="cofactor">
    <cofactor evidence="1">
        <name>heme</name>
        <dbReference type="ChEBI" id="CHEBI:30413"/>
    </cofactor>
</comment>
<comment type="pathway">
    <text evidence="4">Steroid metabolism; ergosterol biosynthesis.</text>
</comment>
<comment type="subcellular location">
    <subcellularLocation>
        <location evidence="5">Endoplasmic reticulum membrane</location>
        <topology evidence="3">Single-pass membrane protein</topology>
    </subcellularLocation>
</comment>
<comment type="miscellaneous">
    <text evidence="7">In Aspergillus, the biosynthesis pathway of the sterol precursors leading to the prevalent sterol ergosterol differs from yeast. The ring system of lanosterol in S.cerevisiae is firstly demethylised in three enzymatic steps leading to the intermediate zymosterol and secondly a methyl group is added to zymosterol by the sterol 24-C-methyltransferase to form fecosterol. In Aspergillus, lanosterol is firstly transmethylated by the sterol 24-C-methyltransferase leading to the intermediate eburicol and secondly demethylated in three steps to form fecosterol.</text>
</comment>
<comment type="similarity">
    <text evidence="5">Belongs to the cytochrome P450 family.</text>
</comment>
<feature type="chain" id="PRO_0000454130" description="C-22 sterol desaturase erg5">
    <location>
        <begin position="1"/>
        <end position="521"/>
    </location>
</feature>
<feature type="transmembrane region" description="Helical" evidence="3">
    <location>
        <begin position="30"/>
        <end position="50"/>
    </location>
</feature>
<dbReference type="EC" id="1.14.19.41" evidence="2"/>
<dbReference type="EMBL" id="AAHF01000007">
    <property type="protein sequence ID" value="EAL88107.1"/>
    <property type="molecule type" value="Genomic_DNA"/>
</dbReference>
<dbReference type="RefSeq" id="XP_750145.1">
    <property type="nucleotide sequence ID" value="XM_745052.1"/>
</dbReference>
<dbReference type="SMR" id="Q4WK25"/>
<dbReference type="FunCoup" id="Q4WK25">
    <property type="interactions" value="1524"/>
</dbReference>
<dbReference type="STRING" id="330879.Q4WK25"/>
<dbReference type="EnsemblFungi" id="EAL88107">
    <property type="protein sequence ID" value="EAL88107"/>
    <property type="gene ID" value="AFUA_1G03950"/>
</dbReference>
<dbReference type="GeneID" id="3507982"/>
<dbReference type="KEGG" id="afm:AFUA_1G03950"/>
<dbReference type="eggNOG" id="KOG0157">
    <property type="taxonomic scope" value="Eukaryota"/>
</dbReference>
<dbReference type="HOGENOM" id="CLU_023517_0_0_1"/>
<dbReference type="InParanoid" id="Q4WK25"/>
<dbReference type="OMA" id="KCIGLEY"/>
<dbReference type="OrthoDB" id="1372046at2759"/>
<dbReference type="UniPathway" id="UPA00768"/>
<dbReference type="Proteomes" id="UP000002530">
    <property type="component" value="Chromosome 1"/>
</dbReference>
<dbReference type="GO" id="GO:0005789">
    <property type="term" value="C:endoplasmic reticulum membrane"/>
    <property type="evidence" value="ECO:0007669"/>
    <property type="project" value="UniProtKB-SubCell"/>
</dbReference>
<dbReference type="GO" id="GO:0000249">
    <property type="term" value="F:C-22 sterol desaturase (NADPH) activity"/>
    <property type="evidence" value="ECO:0007669"/>
    <property type="project" value="EnsemblFungi"/>
</dbReference>
<dbReference type="GO" id="GO:0020037">
    <property type="term" value="F:heme binding"/>
    <property type="evidence" value="ECO:0007669"/>
    <property type="project" value="InterPro"/>
</dbReference>
<dbReference type="GO" id="GO:0005506">
    <property type="term" value="F:iron ion binding"/>
    <property type="evidence" value="ECO:0007669"/>
    <property type="project" value="InterPro"/>
</dbReference>
<dbReference type="GO" id="GO:0004497">
    <property type="term" value="F:monooxygenase activity"/>
    <property type="evidence" value="ECO:0007669"/>
    <property type="project" value="UniProtKB-KW"/>
</dbReference>
<dbReference type="GO" id="GO:0016491">
    <property type="term" value="F:oxidoreductase activity"/>
    <property type="evidence" value="ECO:0000318"/>
    <property type="project" value="GO_Central"/>
</dbReference>
<dbReference type="GO" id="GO:0006696">
    <property type="term" value="P:ergosterol biosynthetic process"/>
    <property type="evidence" value="ECO:0000318"/>
    <property type="project" value="GO_Central"/>
</dbReference>
<dbReference type="CDD" id="cd11082">
    <property type="entry name" value="CYP61_CYP710"/>
    <property type="match status" value="1"/>
</dbReference>
<dbReference type="FunFam" id="1.10.630.10:FF:000021">
    <property type="entry name" value="Cytochrome P450 61"/>
    <property type="match status" value="1"/>
</dbReference>
<dbReference type="Gene3D" id="1.10.630.10">
    <property type="entry name" value="Cytochrome P450"/>
    <property type="match status" value="1"/>
</dbReference>
<dbReference type="InterPro" id="IPR001128">
    <property type="entry name" value="Cyt_P450"/>
</dbReference>
<dbReference type="InterPro" id="IPR017972">
    <property type="entry name" value="Cyt_P450_CS"/>
</dbReference>
<dbReference type="InterPro" id="IPR002401">
    <property type="entry name" value="Cyt_P450_E_grp-I"/>
</dbReference>
<dbReference type="InterPro" id="IPR036396">
    <property type="entry name" value="Cyt_P450_sf"/>
</dbReference>
<dbReference type="PANTHER" id="PTHR24286:SF228">
    <property type="entry name" value="C-22 STEROL DESATURASE ERG5"/>
    <property type="match status" value="1"/>
</dbReference>
<dbReference type="PANTHER" id="PTHR24286">
    <property type="entry name" value="CYTOCHROME P450 26"/>
    <property type="match status" value="1"/>
</dbReference>
<dbReference type="Pfam" id="PF00067">
    <property type="entry name" value="p450"/>
    <property type="match status" value="1"/>
</dbReference>
<dbReference type="PRINTS" id="PR00463">
    <property type="entry name" value="EP450I"/>
</dbReference>
<dbReference type="PRINTS" id="PR00385">
    <property type="entry name" value="P450"/>
</dbReference>
<dbReference type="SUPFAM" id="SSF48264">
    <property type="entry name" value="Cytochrome P450"/>
    <property type="match status" value="1"/>
</dbReference>
<dbReference type="PROSITE" id="PS00086">
    <property type="entry name" value="CYTOCHROME_P450"/>
    <property type="match status" value="1"/>
</dbReference>
<accession>Q4WK25</accession>
<protein>
    <recommendedName>
        <fullName evidence="4">C-22 sterol desaturase erg5</fullName>
        <ecNumber evidence="2">1.14.19.41</ecNumber>
    </recommendedName>
    <alternativeName>
        <fullName evidence="5">Cytochrome P450 monooxygenase erg5</fullName>
    </alternativeName>
    <alternativeName>
        <fullName evidence="4">Ergosterol biosynthesis protein 5</fullName>
    </alternativeName>
</protein>
<sequence length="521" mass="59042">MANVNGSFVSPSADATISPQLFYNVDSLSAVLNGFTFWKALATLFFAAVIYDQLRYFYLKGSLVGPTFKLPFMGPFLQSVNPKFHEYKAKWDSGELSCVSVFHKFVVIASTRDMSRKIFNSPAYVKPCVVDIAHKLLGPDNWVFLDGKEHVEFRKGLNGLFTRSALSSYLPVMEECYNKYYKYFLEKSKANDYKPEPWMPEFRELMCAVSCRTFVGHYMTDAAIKKIADDYYMITAALELVNFPFILPFTKAWYGKKASDMVLEEFSNCAAKSKAHMAAGGEITCIMDAWVKAQQDSAKYNEKIAKGLPVEDSEKPSHLLREFTDYEIAQTVFTLLFASQDATSAACTWLFQLVADRPDVLEKIREENLRVRNGNINAPLTMDLLDEMKYTRAVVRETLRYRPPVIMVPYLVKKDFPITDSITVSKGSMIIPSVWPATHDPEAYPNPDSFDPDRWITGDAEKQAKNFLVFGTGPHYCLGQTYAQLNLIAMIGKASLEMDWEHAPTPKSEDIKVFATIFPEV</sequence>
<gene>
    <name evidence="4" type="primary">erg5</name>
    <name type="ORF">AFUA_1G03950</name>
</gene>
<name>ERG5_ASPFU</name>
<reference key="1">
    <citation type="journal article" date="2005" name="Nature">
        <title>Genomic sequence of the pathogenic and allergenic filamentous fungus Aspergillus fumigatus.</title>
        <authorList>
            <person name="Nierman W.C."/>
            <person name="Pain A."/>
            <person name="Anderson M.J."/>
            <person name="Wortman J.R."/>
            <person name="Kim H.S."/>
            <person name="Arroyo J."/>
            <person name="Berriman M."/>
            <person name="Abe K."/>
            <person name="Archer D.B."/>
            <person name="Bermejo C."/>
            <person name="Bennett J.W."/>
            <person name="Bowyer P."/>
            <person name="Chen D."/>
            <person name="Collins M."/>
            <person name="Coulsen R."/>
            <person name="Davies R."/>
            <person name="Dyer P.S."/>
            <person name="Farman M.L."/>
            <person name="Fedorova N."/>
            <person name="Fedorova N.D."/>
            <person name="Feldblyum T.V."/>
            <person name="Fischer R."/>
            <person name="Fosker N."/>
            <person name="Fraser A."/>
            <person name="Garcia J.L."/>
            <person name="Garcia M.J."/>
            <person name="Goble A."/>
            <person name="Goldman G.H."/>
            <person name="Gomi K."/>
            <person name="Griffith-Jones S."/>
            <person name="Gwilliam R."/>
            <person name="Haas B.J."/>
            <person name="Haas H."/>
            <person name="Harris D.E."/>
            <person name="Horiuchi H."/>
            <person name="Huang J."/>
            <person name="Humphray S."/>
            <person name="Jimenez J."/>
            <person name="Keller N."/>
            <person name="Khouri H."/>
            <person name="Kitamoto K."/>
            <person name="Kobayashi T."/>
            <person name="Konzack S."/>
            <person name="Kulkarni R."/>
            <person name="Kumagai T."/>
            <person name="Lafton A."/>
            <person name="Latge J.-P."/>
            <person name="Li W."/>
            <person name="Lord A."/>
            <person name="Lu C."/>
            <person name="Majoros W.H."/>
            <person name="May G.S."/>
            <person name="Miller B.L."/>
            <person name="Mohamoud Y."/>
            <person name="Molina M."/>
            <person name="Monod M."/>
            <person name="Mouyna I."/>
            <person name="Mulligan S."/>
            <person name="Murphy L.D."/>
            <person name="O'Neil S."/>
            <person name="Paulsen I."/>
            <person name="Penalva M.A."/>
            <person name="Pertea M."/>
            <person name="Price C."/>
            <person name="Pritchard B.L."/>
            <person name="Quail M.A."/>
            <person name="Rabbinowitsch E."/>
            <person name="Rawlins N."/>
            <person name="Rajandream M.A."/>
            <person name="Reichard U."/>
            <person name="Renauld H."/>
            <person name="Robson G.D."/>
            <person name="Rodriguez de Cordoba S."/>
            <person name="Rodriguez-Pena J.M."/>
            <person name="Ronning C.M."/>
            <person name="Rutter S."/>
            <person name="Salzberg S.L."/>
            <person name="Sanchez M."/>
            <person name="Sanchez-Ferrero J.C."/>
            <person name="Saunders D."/>
            <person name="Seeger K."/>
            <person name="Squares R."/>
            <person name="Squares S."/>
            <person name="Takeuchi M."/>
            <person name="Tekaia F."/>
            <person name="Turner G."/>
            <person name="Vazquez de Aldana C.R."/>
            <person name="Weidman J."/>
            <person name="White O."/>
            <person name="Woodward J.R."/>
            <person name="Yu J.-H."/>
            <person name="Fraser C.M."/>
            <person name="Galagan J.E."/>
            <person name="Asai K."/>
            <person name="Machida M."/>
            <person name="Hall N."/>
            <person name="Barrell B.G."/>
            <person name="Denning D.W."/>
        </authorList>
    </citation>
    <scope>NUCLEOTIDE SEQUENCE [LARGE SCALE GENOMIC DNA]</scope>
    <source>
        <strain>ATCC MYA-4609 / CBS 101355 / FGSC A1100 / Af293</strain>
    </source>
</reference>
<reference key="2">
    <citation type="journal article" date="2005" name="Med. Mycol.">
        <title>The ergosterol biosynthesis pathway, transporter genes, and azole resistance in Aspergillus fumigatus.</title>
        <authorList>
            <person name="Ferreira M.E."/>
            <person name="Colombo A.L."/>
            <person name="Paulsen I."/>
            <person name="Ren Q."/>
            <person name="Wortman J."/>
            <person name="Huang J."/>
            <person name="Goldman M.H."/>
            <person name="Goldman G.H."/>
        </authorList>
    </citation>
    <scope>IDENTIFICATION</scope>
    <scope>FUNCTION</scope>
    <scope>PATHWAY</scope>
</reference>
<reference key="3">
    <citation type="journal article" date="2008" name="Steroids">
        <title>Ergosterol biosynthesis pathway in Aspergillus fumigatus.</title>
        <authorList>
            <person name="Alcazar-Fuoli L."/>
            <person name="Mellado E."/>
            <person name="Garcia-Effron G."/>
            <person name="Lopez J.F."/>
            <person name="Grimalt J.O."/>
            <person name="Cuenca-Estrella J.M."/>
            <person name="Rodriguez-Tudela J.L."/>
        </authorList>
    </citation>
    <scope>FUNCTION</scope>
</reference>